<sequence length="188" mass="20053">MFTAIWVMVGLAIAIGLILGWSAIRFKVEGNPLAEKIDAILPQTQCGQCGFPGCRPYAEAIAKGEADINQCPPGGEEGVKKLAELLGVEPKPLDEAHGTPKPKSVAFIDEQTCIGCTLCIQACPVDAISGAAKQMHTIIADECTGCELCLAPCPVDCISMVPIAEDLPHWKWKHPVVMMKQVGESTRV</sequence>
<accession>Q3SHB7</accession>
<proteinExistence type="inferred from homology"/>
<comment type="function">
    <text evidence="1">Part of a membrane-bound complex that couples electron transfer with translocation of ions across the membrane.</text>
</comment>
<comment type="cofactor">
    <cofactor evidence="1">
        <name>[4Fe-4S] cluster</name>
        <dbReference type="ChEBI" id="CHEBI:49883"/>
    </cofactor>
    <text evidence="1">Binds 3 [4Fe-4S] clusters.</text>
</comment>
<comment type="subunit">
    <text evidence="1">The complex is composed of six subunits: RnfA, RnfB, RnfC, RnfD, RnfE and RnfG.</text>
</comment>
<comment type="subcellular location">
    <subcellularLocation>
        <location evidence="1">Cell inner membrane</location>
    </subcellularLocation>
</comment>
<comment type="similarity">
    <text evidence="1">Belongs to the 4Fe4S bacterial-type ferredoxin family. RnfB subfamily.</text>
</comment>
<feature type="chain" id="PRO_1000013663" description="Ion-translocating oxidoreductase complex subunit B">
    <location>
        <begin position="1"/>
        <end position="188"/>
    </location>
</feature>
<feature type="domain" description="4Fe-4S" evidence="1">
    <location>
        <begin position="29"/>
        <end position="88"/>
    </location>
</feature>
<feature type="domain" description="4Fe-4S ferredoxin-type 1" evidence="1">
    <location>
        <begin position="104"/>
        <end position="133"/>
    </location>
</feature>
<feature type="domain" description="4Fe-4S ferredoxin-type 2" evidence="1">
    <location>
        <begin position="134"/>
        <end position="163"/>
    </location>
</feature>
<feature type="region of interest" description="Hydrophobic" evidence="1">
    <location>
        <begin position="1"/>
        <end position="23"/>
    </location>
</feature>
<feature type="binding site" evidence="1">
    <location>
        <position position="46"/>
    </location>
    <ligand>
        <name>[4Fe-4S] cluster</name>
        <dbReference type="ChEBI" id="CHEBI:49883"/>
        <label>1</label>
    </ligand>
</feature>
<feature type="binding site" evidence="1">
    <location>
        <position position="49"/>
    </location>
    <ligand>
        <name>[4Fe-4S] cluster</name>
        <dbReference type="ChEBI" id="CHEBI:49883"/>
        <label>1</label>
    </ligand>
</feature>
<feature type="binding site" evidence="1">
    <location>
        <position position="54"/>
    </location>
    <ligand>
        <name>[4Fe-4S] cluster</name>
        <dbReference type="ChEBI" id="CHEBI:49883"/>
        <label>1</label>
    </ligand>
</feature>
<feature type="binding site" evidence="1">
    <location>
        <position position="71"/>
    </location>
    <ligand>
        <name>[4Fe-4S] cluster</name>
        <dbReference type="ChEBI" id="CHEBI:49883"/>
        <label>1</label>
    </ligand>
</feature>
<feature type="binding site" evidence="1">
    <location>
        <position position="113"/>
    </location>
    <ligand>
        <name>[4Fe-4S] cluster</name>
        <dbReference type="ChEBI" id="CHEBI:49883"/>
        <label>2</label>
    </ligand>
</feature>
<feature type="binding site" evidence="1">
    <location>
        <position position="116"/>
    </location>
    <ligand>
        <name>[4Fe-4S] cluster</name>
        <dbReference type="ChEBI" id="CHEBI:49883"/>
        <label>2</label>
    </ligand>
</feature>
<feature type="binding site" evidence="1">
    <location>
        <position position="119"/>
    </location>
    <ligand>
        <name>[4Fe-4S] cluster</name>
        <dbReference type="ChEBI" id="CHEBI:49883"/>
        <label>2</label>
    </ligand>
</feature>
<feature type="binding site" evidence="1">
    <location>
        <position position="123"/>
    </location>
    <ligand>
        <name>[4Fe-4S] cluster</name>
        <dbReference type="ChEBI" id="CHEBI:49883"/>
        <label>3</label>
    </ligand>
</feature>
<feature type="binding site" evidence="1">
    <location>
        <position position="143"/>
    </location>
    <ligand>
        <name>[4Fe-4S] cluster</name>
        <dbReference type="ChEBI" id="CHEBI:49883"/>
        <label>3</label>
    </ligand>
</feature>
<feature type="binding site" evidence="1">
    <location>
        <position position="146"/>
    </location>
    <ligand>
        <name>[4Fe-4S] cluster</name>
        <dbReference type="ChEBI" id="CHEBI:49883"/>
        <label>3</label>
    </ligand>
</feature>
<feature type="binding site" evidence="1">
    <location>
        <position position="149"/>
    </location>
    <ligand>
        <name>[4Fe-4S] cluster</name>
        <dbReference type="ChEBI" id="CHEBI:49883"/>
        <label>3</label>
    </ligand>
</feature>
<feature type="binding site" evidence="1">
    <location>
        <position position="153"/>
    </location>
    <ligand>
        <name>[4Fe-4S] cluster</name>
        <dbReference type="ChEBI" id="CHEBI:49883"/>
        <label>2</label>
    </ligand>
</feature>
<dbReference type="EC" id="7.-.-.-" evidence="1"/>
<dbReference type="EMBL" id="CP000116">
    <property type="protein sequence ID" value="AAZ97969.1"/>
    <property type="molecule type" value="Genomic_DNA"/>
</dbReference>
<dbReference type="RefSeq" id="WP_011312528.1">
    <property type="nucleotide sequence ID" value="NC_007404.1"/>
</dbReference>
<dbReference type="SMR" id="Q3SHB7"/>
<dbReference type="STRING" id="292415.Tbd_2016"/>
<dbReference type="KEGG" id="tbd:Tbd_2016"/>
<dbReference type="eggNOG" id="COG2878">
    <property type="taxonomic scope" value="Bacteria"/>
</dbReference>
<dbReference type="HOGENOM" id="CLU_063448_2_0_4"/>
<dbReference type="OrthoDB" id="9789936at2"/>
<dbReference type="Proteomes" id="UP000008291">
    <property type="component" value="Chromosome"/>
</dbReference>
<dbReference type="GO" id="GO:0005886">
    <property type="term" value="C:plasma membrane"/>
    <property type="evidence" value="ECO:0007669"/>
    <property type="project" value="UniProtKB-SubCell"/>
</dbReference>
<dbReference type="GO" id="GO:0051539">
    <property type="term" value="F:4 iron, 4 sulfur cluster binding"/>
    <property type="evidence" value="ECO:0007669"/>
    <property type="project" value="UniProtKB-UniRule"/>
</dbReference>
<dbReference type="GO" id="GO:0009055">
    <property type="term" value="F:electron transfer activity"/>
    <property type="evidence" value="ECO:0007669"/>
    <property type="project" value="InterPro"/>
</dbReference>
<dbReference type="GO" id="GO:0046872">
    <property type="term" value="F:metal ion binding"/>
    <property type="evidence" value="ECO:0007669"/>
    <property type="project" value="UniProtKB-KW"/>
</dbReference>
<dbReference type="GO" id="GO:0022900">
    <property type="term" value="P:electron transport chain"/>
    <property type="evidence" value="ECO:0007669"/>
    <property type="project" value="UniProtKB-UniRule"/>
</dbReference>
<dbReference type="FunFam" id="1.10.15.40:FF:000001">
    <property type="entry name" value="Ion-translocating oxidoreductase complex subunit B"/>
    <property type="match status" value="1"/>
</dbReference>
<dbReference type="Gene3D" id="3.30.70.20">
    <property type="match status" value="1"/>
</dbReference>
<dbReference type="Gene3D" id="1.10.15.40">
    <property type="entry name" value="Electron transport complex subunit B, putative Fe-S cluster"/>
    <property type="match status" value="1"/>
</dbReference>
<dbReference type="HAMAP" id="MF_00463">
    <property type="entry name" value="RsxB_RnfB"/>
    <property type="match status" value="1"/>
</dbReference>
<dbReference type="InterPro" id="IPR007202">
    <property type="entry name" value="4Fe-4S_dom"/>
</dbReference>
<dbReference type="InterPro" id="IPR017896">
    <property type="entry name" value="4Fe4S_Fe-S-bd"/>
</dbReference>
<dbReference type="InterPro" id="IPR017900">
    <property type="entry name" value="4Fe4S_Fe_S_CS"/>
</dbReference>
<dbReference type="InterPro" id="IPR010207">
    <property type="entry name" value="Elect_transpt_cplx_RnfB/RsxB"/>
</dbReference>
<dbReference type="InterPro" id="IPR016463">
    <property type="entry name" value="RnfB/RsxB_Proteobac"/>
</dbReference>
<dbReference type="InterPro" id="IPR050294">
    <property type="entry name" value="RnfB_subfamily"/>
</dbReference>
<dbReference type="NCBIfam" id="NF003475">
    <property type="entry name" value="PRK05113.1"/>
    <property type="match status" value="1"/>
</dbReference>
<dbReference type="NCBIfam" id="TIGR01944">
    <property type="entry name" value="rnfB"/>
    <property type="match status" value="1"/>
</dbReference>
<dbReference type="PANTHER" id="PTHR42859:SF3">
    <property type="entry name" value="ION-TRANSLOCATING OXIDOREDUCTASE COMPLEX SUBUNIT B"/>
    <property type="match status" value="1"/>
</dbReference>
<dbReference type="PANTHER" id="PTHR42859">
    <property type="entry name" value="OXIDOREDUCTASE"/>
    <property type="match status" value="1"/>
</dbReference>
<dbReference type="Pfam" id="PF14697">
    <property type="entry name" value="Fer4_21"/>
    <property type="match status" value="1"/>
</dbReference>
<dbReference type="Pfam" id="PF04060">
    <property type="entry name" value="FeS"/>
    <property type="match status" value="1"/>
</dbReference>
<dbReference type="PIRSF" id="PIRSF005784">
    <property type="entry name" value="Elect_transpt_RnfB"/>
    <property type="match status" value="1"/>
</dbReference>
<dbReference type="SUPFAM" id="SSF54862">
    <property type="entry name" value="4Fe-4S ferredoxins"/>
    <property type="match status" value="1"/>
</dbReference>
<dbReference type="PROSITE" id="PS51656">
    <property type="entry name" value="4FE4S"/>
    <property type="match status" value="1"/>
</dbReference>
<dbReference type="PROSITE" id="PS00198">
    <property type="entry name" value="4FE4S_FER_1"/>
    <property type="match status" value="2"/>
</dbReference>
<dbReference type="PROSITE" id="PS51379">
    <property type="entry name" value="4FE4S_FER_2"/>
    <property type="match status" value="2"/>
</dbReference>
<reference key="1">
    <citation type="journal article" date="2006" name="J. Bacteriol.">
        <title>The genome sequence of the obligately chemolithoautotrophic, facultatively anaerobic bacterium Thiobacillus denitrificans.</title>
        <authorList>
            <person name="Beller H.R."/>
            <person name="Chain P.S."/>
            <person name="Letain T.E."/>
            <person name="Chakicherla A."/>
            <person name="Larimer F.W."/>
            <person name="Richardson P.M."/>
            <person name="Coleman M.A."/>
            <person name="Wood A.P."/>
            <person name="Kelly D.P."/>
        </authorList>
    </citation>
    <scope>NUCLEOTIDE SEQUENCE [LARGE SCALE GENOMIC DNA]</scope>
    <source>
        <strain>ATCC 25259 / T1</strain>
    </source>
</reference>
<protein>
    <recommendedName>
        <fullName evidence="1">Ion-translocating oxidoreductase complex subunit B</fullName>
        <ecNumber evidence="1">7.-.-.-</ecNumber>
    </recommendedName>
    <alternativeName>
        <fullName evidence="1">Rnf electron transport complex subunit B</fullName>
    </alternativeName>
</protein>
<organism>
    <name type="scientific">Thiobacillus denitrificans (strain ATCC 25259 / T1)</name>
    <dbReference type="NCBI Taxonomy" id="292415"/>
    <lineage>
        <taxon>Bacteria</taxon>
        <taxon>Pseudomonadati</taxon>
        <taxon>Pseudomonadota</taxon>
        <taxon>Betaproteobacteria</taxon>
        <taxon>Nitrosomonadales</taxon>
        <taxon>Thiobacillaceae</taxon>
        <taxon>Thiobacillus</taxon>
    </lineage>
</organism>
<keyword id="KW-0004">4Fe-4S</keyword>
<keyword id="KW-0997">Cell inner membrane</keyword>
<keyword id="KW-1003">Cell membrane</keyword>
<keyword id="KW-0249">Electron transport</keyword>
<keyword id="KW-0408">Iron</keyword>
<keyword id="KW-0411">Iron-sulfur</keyword>
<keyword id="KW-0472">Membrane</keyword>
<keyword id="KW-0479">Metal-binding</keyword>
<keyword id="KW-1185">Reference proteome</keyword>
<keyword id="KW-0677">Repeat</keyword>
<keyword id="KW-1278">Translocase</keyword>
<keyword id="KW-0813">Transport</keyword>
<evidence type="ECO:0000255" key="1">
    <source>
        <dbReference type="HAMAP-Rule" id="MF_00463"/>
    </source>
</evidence>
<name>RNFB_THIDA</name>
<gene>
    <name evidence="1" type="primary">rnfB</name>
    <name type="ordered locus">Tbd_2016</name>
</gene>